<keyword id="KW-0963">Cytoplasm</keyword>
<keyword id="KW-0489">Methyltransferase</keyword>
<keyword id="KW-1185">Reference proteome</keyword>
<keyword id="KW-0949">S-adenosyl-L-methionine</keyword>
<keyword id="KW-0808">Transferase</keyword>
<keyword id="KW-0819">tRNA processing</keyword>
<dbReference type="EC" id="2.1.1.206" evidence="1"/>
<dbReference type="EMBL" id="BX950229">
    <property type="protein sequence ID" value="CAF30981.1"/>
    <property type="molecule type" value="Genomic_DNA"/>
</dbReference>
<dbReference type="RefSeq" id="WP_011171369.1">
    <property type="nucleotide sequence ID" value="NC_005791.1"/>
</dbReference>
<dbReference type="SMR" id="Q6LXC7"/>
<dbReference type="STRING" id="267377.MMP1425"/>
<dbReference type="EnsemblBacteria" id="CAF30981">
    <property type="protein sequence ID" value="CAF30981"/>
    <property type="gene ID" value="MMP1425"/>
</dbReference>
<dbReference type="GeneID" id="2762236"/>
<dbReference type="KEGG" id="mmp:MMP1425"/>
<dbReference type="PATRIC" id="fig|267377.15.peg.1461"/>
<dbReference type="eggNOG" id="arCOG01857">
    <property type="taxonomic scope" value="Archaea"/>
</dbReference>
<dbReference type="HOGENOM" id="CLU_123709_0_0_2"/>
<dbReference type="OrthoDB" id="14397at2157"/>
<dbReference type="Proteomes" id="UP000000590">
    <property type="component" value="Chromosome"/>
</dbReference>
<dbReference type="GO" id="GO:0005737">
    <property type="term" value="C:cytoplasm"/>
    <property type="evidence" value="ECO:0007669"/>
    <property type="project" value="UniProtKB-SubCell"/>
</dbReference>
<dbReference type="GO" id="GO:0106059">
    <property type="term" value="F:tRNA (cytidine(56)-2'-O)-methyltransferase activity"/>
    <property type="evidence" value="ECO:0007669"/>
    <property type="project" value="UniProtKB-EC"/>
</dbReference>
<dbReference type="GO" id="GO:0002128">
    <property type="term" value="P:tRNA nucleoside ribose methylation"/>
    <property type="evidence" value="ECO:0007669"/>
    <property type="project" value="UniProtKB-UniRule"/>
</dbReference>
<dbReference type="CDD" id="cd18083">
    <property type="entry name" value="aTrm56-like"/>
    <property type="match status" value="1"/>
</dbReference>
<dbReference type="Gene3D" id="3.40.1280.10">
    <property type="match status" value="1"/>
</dbReference>
<dbReference type="HAMAP" id="MF_00077">
    <property type="entry name" value="tRNA_methyltr_aTrm56"/>
    <property type="match status" value="1"/>
</dbReference>
<dbReference type="InterPro" id="IPR029028">
    <property type="entry name" value="Alpha/beta_knot_MTases"/>
</dbReference>
<dbReference type="InterPro" id="IPR029026">
    <property type="entry name" value="tRNA_m1G_MTases_N"/>
</dbReference>
<dbReference type="InterPro" id="IPR002845">
    <property type="entry name" value="tRNA_mtfrase_aTrm56"/>
</dbReference>
<dbReference type="NCBIfam" id="NF003048">
    <property type="entry name" value="PRK03958.1"/>
    <property type="match status" value="1"/>
</dbReference>
<dbReference type="PANTHER" id="PTHR42197">
    <property type="entry name" value="TRNA (CYTIDINE(56)-2'-O)-METHYLTRANSFERASE"/>
    <property type="match status" value="1"/>
</dbReference>
<dbReference type="PANTHER" id="PTHR42197:SF1">
    <property type="entry name" value="TRNA (CYTIDINE(56)-2'-O)-METHYLTRANSFERASE"/>
    <property type="match status" value="1"/>
</dbReference>
<dbReference type="Pfam" id="PF01994">
    <property type="entry name" value="Trm56"/>
    <property type="match status" value="1"/>
</dbReference>
<dbReference type="PIRSF" id="PIRSF016123">
    <property type="entry name" value="UCP016123"/>
    <property type="match status" value="1"/>
</dbReference>
<dbReference type="SUPFAM" id="SSF75217">
    <property type="entry name" value="alpha/beta knot"/>
    <property type="match status" value="1"/>
</dbReference>
<evidence type="ECO:0000255" key="1">
    <source>
        <dbReference type="HAMAP-Rule" id="MF_00077"/>
    </source>
</evidence>
<reference key="1">
    <citation type="journal article" date="2004" name="J. Bacteriol.">
        <title>Complete genome sequence of the genetically tractable hydrogenotrophic methanogen Methanococcus maripaludis.</title>
        <authorList>
            <person name="Hendrickson E.L."/>
            <person name="Kaul R."/>
            <person name="Zhou Y."/>
            <person name="Bovee D."/>
            <person name="Chapman P."/>
            <person name="Chung J."/>
            <person name="Conway de Macario E."/>
            <person name="Dodsworth J.A."/>
            <person name="Gillett W."/>
            <person name="Graham D.E."/>
            <person name="Hackett M."/>
            <person name="Haydock A.K."/>
            <person name="Kang A."/>
            <person name="Land M.L."/>
            <person name="Levy R."/>
            <person name="Lie T.J."/>
            <person name="Major T.A."/>
            <person name="Moore B.C."/>
            <person name="Porat I."/>
            <person name="Palmeiri A."/>
            <person name="Rouse G."/>
            <person name="Saenphimmachak C."/>
            <person name="Soell D."/>
            <person name="Van Dien S."/>
            <person name="Wang T."/>
            <person name="Whitman W.B."/>
            <person name="Xia Q."/>
            <person name="Zhang Y."/>
            <person name="Larimer F.W."/>
            <person name="Olson M.V."/>
            <person name="Leigh J.A."/>
        </authorList>
    </citation>
    <scope>NUCLEOTIDE SEQUENCE [LARGE SCALE GENOMIC DNA]</scope>
    <source>
        <strain>DSM 14266 / JCM 13030 / NBRC 101832 / S2 / LL</strain>
    </source>
</reference>
<feature type="chain" id="PRO_0000365306" description="tRNA (cytidine(56)-2'-O)-methyltransferase">
    <location>
        <begin position="1"/>
        <end position="179"/>
    </location>
</feature>
<feature type="binding site" evidence="1">
    <location>
        <position position="82"/>
    </location>
    <ligand>
        <name>S-adenosyl-L-methionine</name>
        <dbReference type="ChEBI" id="CHEBI:59789"/>
    </ligand>
</feature>
<feature type="binding site" evidence="1">
    <location>
        <begin position="112"/>
        <end position="116"/>
    </location>
    <ligand>
        <name>S-adenosyl-L-methionine</name>
        <dbReference type="ChEBI" id="CHEBI:59789"/>
    </ligand>
</feature>
<feature type="binding site" evidence="1">
    <location>
        <begin position="130"/>
        <end position="137"/>
    </location>
    <ligand>
        <name>S-adenosyl-L-methionine</name>
        <dbReference type="ChEBI" id="CHEBI:59789"/>
    </ligand>
</feature>
<gene>
    <name type="ordered locus">MMP1425</name>
</gene>
<protein>
    <recommendedName>
        <fullName evidence="1">tRNA (cytidine(56)-2'-O)-methyltransferase</fullName>
        <ecNumber evidence="1">2.1.1.206</ecNumber>
    </recommendedName>
    <alternativeName>
        <fullName evidence="1">tRNA ribose 2'-O-methyltransferase aTrm56</fullName>
    </alternativeName>
</protein>
<proteinExistence type="inferred from homology"/>
<name>TRM56_METMP</name>
<sequence length="179" mass="20477">MAIEILRLGHRGERDKRISTHVALTSRALGAEKIIFTEEDKHVKESVERIVEAWGGEFKFEVVKSWRSYAKRFKDNGIVVHLTMYGENINKIMTEIREDISKTNKNLLLIIGAEKVPREAYDLADYNLSVGNQPHSEVAALAIFLDRFTEGKTLYSEYDDAKIKVTPSKSEKCVFVEKD</sequence>
<comment type="function">
    <text evidence="1">Specifically catalyzes the AdoMet-dependent 2'-O-ribose methylation of cytidine at position 56 in tRNAs.</text>
</comment>
<comment type="catalytic activity">
    <reaction evidence="1">
        <text>cytidine(56) in tRNA + S-adenosyl-L-methionine = 2'-O-methylcytidine(56) in tRNA + S-adenosyl-L-homocysteine + H(+)</text>
        <dbReference type="Rhea" id="RHEA:42968"/>
        <dbReference type="Rhea" id="RHEA-COMP:10308"/>
        <dbReference type="Rhea" id="RHEA-COMP:10309"/>
        <dbReference type="ChEBI" id="CHEBI:15378"/>
        <dbReference type="ChEBI" id="CHEBI:57856"/>
        <dbReference type="ChEBI" id="CHEBI:59789"/>
        <dbReference type="ChEBI" id="CHEBI:74495"/>
        <dbReference type="ChEBI" id="CHEBI:82748"/>
        <dbReference type="EC" id="2.1.1.206"/>
    </reaction>
</comment>
<comment type="subunit">
    <text evidence="1">Homodimer.</text>
</comment>
<comment type="subcellular location">
    <subcellularLocation>
        <location evidence="1">Cytoplasm</location>
    </subcellularLocation>
</comment>
<comment type="similarity">
    <text evidence="1">Belongs to the aTrm56 family.</text>
</comment>
<accession>Q6LXC7</accession>
<organism>
    <name type="scientific">Methanococcus maripaludis (strain DSM 14266 / JCM 13030 / NBRC 101832 / S2 / LL)</name>
    <dbReference type="NCBI Taxonomy" id="267377"/>
    <lineage>
        <taxon>Archaea</taxon>
        <taxon>Methanobacteriati</taxon>
        <taxon>Methanobacteriota</taxon>
        <taxon>Methanomada group</taxon>
        <taxon>Methanococci</taxon>
        <taxon>Methanococcales</taxon>
        <taxon>Methanococcaceae</taxon>
        <taxon>Methanococcus</taxon>
    </lineage>
</organism>